<organism>
    <name type="scientific">Arabidopsis thaliana</name>
    <name type="common">Mouse-ear cress</name>
    <dbReference type="NCBI Taxonomy" id="3702"/>
    <lineage>
        <taxon>Eukaryota</taxon>
        <taxon>Viridiplantae</taxon>
        <taxon>Streptophyta</taxon>
        <taxon>Embryophyta</taxon>
        <taxon>Tracheophyta</taxon>
        <taxon>Spermatophyta</taxon>
        <taxon>Magnoliopsida</taxon>
        <taxon>eudicotyledons</taxon>
        <taxon>Gunneridae</taxon>
        <taxon>Pentapetalae</taxon>
        <taxon>rosids</taxon>
        <taxon>malvids</taxon>
        <taxon>Brassicales</taxon>
        <taxon>Brassicaceae</taxon>
        <taxon>Camelineae</taxon>
        <taxon>Arabidopsis</taxon>
    </lineage>
</organism>
<gene>
    <name evidence="5 6" type="primary">DHU1</name>
    <name evidence="8" type="ordered locus">At4g34280</name>
    <name evidence="9" type="ORF">F10M10.50</name>
    <name evidence="9" type="ORF">F10M10_50</name>
</gene>
<evidence type="ECO:0000255" key="1"/>
<evidence type="ECO:0000255" key="2">
    <source>
        <dbReference type="PROSITE-ProRule" id="PRU00768"/>
    </source>
</evidence>
<evidence type="ECO:0000269" key="3">
    <source>
    </source>
</evidence>
<evidence type="ECO:0000269" key="4">
    <source>
    </source>
</evidence>
<evidence type="ECO:0000303" key="5">
    <source>
    </source>
</evidence>
<evidence type="ECO:0000303" key="6">
    <source>
    </source>
</evidence>
<evidence type="ECO:0000305" key="7"/>
<evidence type="ECO:0000312" key="8">
    <source>
        <dbReference type="Araport" id="AT4G34280"/>
    </source>
</evidence>
<evidence type="ECO:0000312" key="9">
    <source>
        <dbReference type="EMBL" id="AEE86354.1"/>
    </source>
</evidence>
<feature type="chain" id="PRO_0000454923" description="Protein DWD HYPERSENSITIVE TO UV-B 1">
    <location>
        <begin position="1"/>
        <end position="783"/>
    </location>
</feature>
<feature type="repeat" description="WD 1" evidence="1">
    <location>
        <begin position="145"/>
        <end position="198"/>
    </location>
</feature>
<feature type="repeat" description="WD 2" evidence="1">
    <location>
        <begin position="212"/>
        <end position="256"/>
    </location>
</feature>
<feature type="repeat" description="WD 3" evidence="1">
    <location>
        <begin position="439"/>
        <end position="480"/>
    </location>
</feature>
<feature type="repeat" description="WD 4" evidence="1">
    <location>
        <begin position="485"/>
        <end position="525"/>
    </location>
</feature>
<feature type="repeat" description="WD 5" evidence="1">
    <location>
        <begin position="538"/>
        <end position="577"/>
    </location>
</feature>
<feature type="repeat" description="WD 6" evidence="1">
    <location>
        <begin position="581"/>
        <end position="621"/>
    </location>
</feature>
<feature type="repeat" description="WD 7" evidence="1">
    <location>
        <begin position="625"/>
        <end position="664"/>
    </location>
</feature>
<feature type="repeat" description="WD 8" evidence="1">
    <location>
        <begin position="666"/>
        <end position="710"/>
    </location>
</feature>
<feature type="short sequence motif" description="Nuclear localization signal" evidence="2">
    <location>
        <begin position="382"/>
        <end position="389"/>
    </location>
</feature>
<dbReference type="EMBL" id="AL035521">
    <property type="protein sequence ID" value="CAB36705.1"/>
    <property type="status" value="ALT_SEQ"/>
    <property type="molecule type" value="Genomic_DNA"/>
</dbReference>
<dbReference type="EMBL" id="AL161585">
    <property type="protein sequence ID" value="CAB80145.1"/>
    <property type="status" value="ALT_SEQ"/>
    <property type="molecule type" value="Genomic_DNA"/>
</dbReference>
<dbReference type="EMBL" id="CP002687">
    <property type="protein sequence ID" value="AEE86354.1"/>
    <property type="molecule type" value="Genomic_DNA"/>
</dbReference>
<dbReference type="EMBL" id="AK117309">
    <property type="protein sequence ID" value="BAC41980.1"/>
    <property type="molecule type" value="mRNA"/>
</dbReference>
<dbReference type="EMBL" id="BT005961">
    <property type="protein sequence ID" value="AAO64896.1"/>
    <property type="molecule type" value="mRNA"/>
</dbReference>
<dbReference type="PIR" id="T04774">
    <property type="entry name" value="T04774"/>
</dbReference>
<dbReference type="RefSeq" id="NP_195154.2">
    <property type="nucleotide sequence ID" value="NM_119593.4"/>
</dbReference>
<dbReference type="SMR" id="Q8GYY7"/>
<dbReference type="FunCoup" id="Q8GYY7">
    <property type="interactions" value="980"/>
</dbReference>
<dbReference type="STRING" id="3702.Q8GYY7"/>
<dbReference type="iPTMnet" id="Q8GYY7"/>
<dbReference type="PaxDb" id="3702-AT4G34280.1"/>
<dbReference type="ProteomicsDB" id="191457"/>
<dbReference type="EnsemblPlants" id="AT4G34280.1">
    <property type="protein sequence ID" value="AT4G34280.1"/>
    <property type="gene ID" value="AT4G34280"/>
</dbReference>
<dbReference type="GeneID" id="829578"/>
<dbReference type="Gramene" id="AT4G34280.1">
    <property type="protein sequence ID" value="AT4G34280.1"/>
    <property type="gene ID" value="AT4G34280"/>
</dbReference>
<dbReference type="KEGG" id="ath:AT4G34280"/>
<dbReference type="Araport" id="AT4G34280"/>
<dbReference type="TAIR" id="AT4G34280">
    <property type="gene designation" value="DHU1"/>
</dbReference>
<dbReference type="eggNOG" id="KOG0531">
    <property type="taxonomic scope" value="Eukaryota"/>
</dbReference>
<dbReference type="HOGENOM" id="CLU_012003_0_0_1"/>
<dbReference type="InParanoid" id="Q8GYY7"/>
<dbReference type="OMA" id="YMINSLP"/>
<dbReference type="OrthoDB" id="20669at2759"/>
<dbReference type="PhylomeDB" id="Q8GYY7"/>
<dbReference type="PRO" id="PR:Q8GYY7"/>
<dbReference type="Proteomes" id="UP000006548">
    <property type="component" value="Chromosome 4"/>
</dbReference>
<dbReference type="ExpressionAtlas" id="Q8GYY7">
    <property type="expression patterns" value="baseline and differential"/>
</dbReference>
<dbReference type="GO" id="GO:0080008">
    <property type="term" value="C:Cul4-RING E3 ubiquitin ligase complex"/>
    <property type="evidence" value="ECO:0000353"/>
    <property type="project" value="TAIR"/>
</dbReference>
<dbReference type="GO" id="GO:0005634">
    <property type="term" value="C:nucleus"/>
    <property type="evidence" value="ECO:0007669"/>
    <property type="project" value="UniProtKB-SubCell"/>
</dbReference>
<dbReference type="GO" id="GO:0071493">
    <property type="term" value="P:cellular response to UV-B"/>
    <property type="evidence" value="ECO:0000315"/>
    <property type="project" value="TAIR"/>
</dbReference>
<dbReference type="GO" id="GO:0010224">
    <property type="term" value="P:response to UV-B"/>
    <property type="evidence" value="ECO:0000270"/>
    <property type="project" value="UniProtKB"/>
</dbReference>
<dbReference type="FunFam" id="2.130.10.10:FF:001222">
    <property type="entry name" value="Transducin family protein"/>
    <property type="match status" value="1"/>
</dbReference>
<dbReference type="FunFam" id="3.80.10.10:FF:001297">
    <property type="entry name" value="Uncharacterized protein AT4g34280"/>
    <property type="match status" value="1"/>
</dbReference>
<dbReference type="Gene3D" id="3.80.10.10">
    <property type="entry name" value="Ribonuclease Inhibitor"/>
    <property type="match status" value="2"/>
</dbReference>
<dbReference type="Gene3D" id="2.130.10.10">
    <property type="entry name" value="YVTN repeat-like/Quinoprotein amine dehydrogenase"/>
    <property type="match status" value="1"/>
</dbReference>
<dbReference type="InterPro" id="IPR046377">
    <property type="entry name" value="DHU1"/>
</dbReference>
<dbReference type="InterPro" id="IPR048514">
    <property type="entry name" value="DHU1_N"/>
</dbReference>
<dbReference type="InterPro" id="IPR032675">
    <property type="entry name" value="LRR_dom_sf"/>
</dbReference>
<dbReference type="InterPro" id="IPR003603">
    <property type="entry name" value="U2A'_phosphoprotein32A_C"/>
</dbReference>
<dbReference type="InterPro" id="IPR015943">
    <property type="entry name" value="WD40/YVTN_repeat-like_dom_sf"/>
</dbReference>
<dbReference type="InterPro" id="IPR036322">
    <property type="entry name" value="WD40_repeat_dom_sf"/>
</dbReference>
<dbReference type="InterPro" id="IPR001680">
    <property type="entry name" value="WD40_rpt"/>
</dbReference>
<dbReference type="PANTHER" id="PTHR47201">
    <property type="entry name" value="BNAC09G30780D PROTEIN"/>
    <property type="match status" value="1"/>
</dbReference>
<dbReference type="PANTHER" id="PTHR47201:SF1">
    <property type="entry name" value="PROTEIN DWD HYPERSENSITIVE TO UV-B 1"/>
    <property type="match status" value="1"/>
</dbReference>
<dbReference type="Pfam" id="PF20919">
    <property type="entry name" value="DHU1_N"/>
    <property type="match status" value="1"/>
</dbReference>
<dbReference type="Pfam" id="PF00400">
    <property type="entry name" value="WD40"/>
    <property type="match status" value="1"/>
</dbReference>
<dbReference type="SMART" id="SM00446">
    <property type="entry name" value="LRRcap"/>
    <property type="match status" value="1"/>
</dbReference>
<dbReference type="SMART" id="SM00320">
    <property type="entry name" value="WD40"/>
    <property type="match status" value="4"/>
</dbReference>
<dbReference type="SUPFAM" id="SSF52058">
    <property type="entry name" value="L domain-like"/>
    <property type="match status" value="1"/>
</dbReference>
<dbReference type="SUPFAM" id="SSF50978">
    <property type="entry name" value="WD40 repeat-like"/>
    <property type="match status" value="1"/>
</dbReference>
<dbReference type="PROSITE" id="PS50082">
    <property type="entry name" value="WD_REPEATS_2"/>
    <property type="match status" value="1"/>
</dbReference>
<dbReference type="PROSITE" id="PS50294">
    <property type="entry name" value="WD_REPEATS_REGION"/>
    <property type="match status" value="1"/>
</dbReference>
<keyword id="KW-0539">Nucleus</keyword>
<keyword id="KW-1185">Reference proteome</keyword>
<keyword id="KW-0677">Repeat</keyword>
<keyword id="KW-0853">WD repeat</keyword>
<sequence length="783" mass="88171">MATLTEIATLEEKYIELCKMHGILPNTAILSAFFEAEVKKSRNQRCIMNLYVDRVKYDDYLPLLELCNEINTSEVQGIDLFVRSACSLEDHYALPLIRSVNQKLRVVHLHDSFGKNFWQDVFFQGLSCKVLNVRSMHIHKLNIVGEFTQLHTLILDKNRIVGFGEDCFSCMPKLTYLSMCDTLVSDLWTSAAALLKLPSLKELRFQIWISCSDSSPLNSESSPSSSTKDDINTFIESDPPVEADMWDVAEQMDPSLPVEETLHSMDFSYKIPEQDDLDSHVSVSAGLNGEVLMREKVRRGKMPYQPKDVSPVDTFTRQFGNVGLKYISSKASPICSEKHYRMYMINSLPKLQVLDNLAIRKSDRDKAIETYSANFEDLPYKRKKESVVRVLENREKRSSKGKSQNSYKRSLCAAKMGSPASPLLHSLPFLSSRIQQEDDNSRLCPRQFEYHPLDPSLMVFGTLDGEVVVLNHESGKIFRYIPSNGSQSTILGLCWLKIYPSMVIAGSANGSLKLYDIQKASSTVTTSSHSTSGSVTFDEFDQLTSVHANSTDQLFLASGYSKDVALYDIGRGTRLQVFANMHQEHINVVKFSNHSPFLFATSSFDKDVKLWDLRQEPSRPCYTASSTKGNVMVCFSPDDRYLLASAVDNEVRQLLTVDGRLHLNFEIVPRVSSMNYTRSYYMNGNDYIISGSCDENVIRVCCAQTGRRLRDVTLEGNGSDFSMMYVQSLRGDPFRDFNMSVLAAYARSSSLSEIVKVNLLASRDSTAEESHGLRSYPSSSMGG</sequence>
<reference key="1">
    <citation type="journal article" date="1999" name="Nature">
        <title>Sequence and analysis of chromosome 4 of the plant Arabidopsis thaliana.</title>
        <authorList>
            <person name="Mayer K.F.X."/>
            <person name="Schueller C."/>
            <person name="Wambutt R."/>
            <person name="Murphy G."/>
            <person name="Volckaert G."/>
            <person name="Pohl T."/>
            <person name="Duesterhoeft A."/>
            <person name="Stiekema W."/>
            <person name="Entian K.-D."/>
            <person name="Terryn N."/>
            <person name="Harris B."/>
            <person name="Ansorge W."/>
            <person name="Brandt P."/>
            <person name="Grivell L.A."/>
            <person name="Rieger M."/>
            <person name="Weichselgartner M."/>
            <person name="de Simone V."/>
            <person name="Obermaier B."/>
            <person name="Mache R."/>
            <person name="Mueller M."/>
            <person name="Kreis M."/>
            <person name="Delseny M."/>
            <person name="Puigdomenech P."/>
            <person name="Watson M."/>
            <person name="Schmidtheini T."/>
            <person name="Reichert B."/>
            <person name="Portetelle D."/>
            <person name="Perez-Alonso M."/>
            <person name="Boutry M."/>
            <person name="Bancroft I."/>
            <person name="Vos P."/>
            <person name="Hoheisel J."/>
            <person name="Zimmermann W."/>
            <person name="Wedler H."/>
            <person name="Ridley P."/>
            <person name="Langham S.-A."/>
            <person name="McCullagh B."/>
            <person name="Bilham L."/>
            <person name="Robben J."/>
            <person name="van der Schueren J."/>
            <person name="Grymonprez B."/>
            <person name="Chuang Y.-J."/>
            <person name="Vandenbussche F."/>
            <person name="Braeken M."/>
            <person name="Weltjens I."/>
            <person name="Voet M."/>
            <person name="Bastiaens I."/>
            <person name="Aert R."/>
            <person name="Defoor E."/>
            <person name="Weitzenegger T."/>
            <person name="Bothe G."/>
            <person name="Ramsperger U."/>
            <person name="Hilbert H."/>
            <person name="Braun M."/>
            <person name="Holzer E."/>
            <person name="Brandt A."/>
            <person name="Peters S."/>
            <person name="van Staveren M."/>
            <person name="Dirkse W."/>
            <person name="Mooijman P."/>
            <person name="Klein Lankhorst R."/>
            <person name="Rose M."/>
            <person name="Hauf J."/>
            <person name="Koetter P."/>
            <person name="Berneiser S."/>
            <person name="Hempel S."/>
            <person name="Feldpausch M."/>
            <person name="Lamberth S."/>
            <person name="Van den Daele H."/>
            <person name="De Keyser A."/>
            <person name="Buysshaert C."/>
            <person name="Gielen J."/>
            <person name="Villarroel R."/>
            <person name="De Clercq R."/>
            <person name="van Montagu M."/>
            <person name="Rogers J."/>
            <person name="Cronin A."/>
            <person name="Quail M.A."/>
            <person name="Bray-Allen S."/>
            <person name="Clark L."/>
            <person name="Doggett J."/>
            <person name="Hall S."/>
            <person name="Kay M."/>
            <person name="Lennard N."/>
            <person name="McLay K."/>
            <person name="Mayes R."/>
            <person name="Pettett A."/>
            <person name="Rajandream M.A."/>
            <person name="Lyne M."/>
            <person name="Benes V."/>
            <person name="Rechmann S."/>
            <person name="Borkova D."/>
            <person name="Bloecker H."/>
            <person name="Scharfe M."/>
            <person name="Grimm M."/>
            <person name="Loehnert T.-H."/>
            <person name="Dose S."/>
            <person name="de Haan M."/>
            <person name="Maarse A.C."/>
            <person name="Schaefer M."/>
            <person name="Mueller-Auer S."/>
            <person name="Gabel C."/>
            <person name="Fuchs M."/>
            <person name="Fartmann B."/>
            <person name="Granderath K."/>
            <person name="Dauner D."/>
            <person name="Herzl A."/>
            <person name="Neumann S."/>
            <person name="Argiriou A."/>
            <person name="Vitale D."/>
            <person name="Liguori R."/>
            <person name="Piravandi E."/>
            <person name="Massenet O."/>
            <person name="Quigley F."/>
            <person name="Clabauld G."/>
            <person name="Muendlein A."/>
            <person name="Felber R."/>
            <person name="Schnabl S."/>
            <person name="Hiller R."/>
            <person name="Schmidt W."/>
            <person name="Lecharny A."/>
            <person name="Aubourg S."/>
            <person name="Chefdor F."/>
            <person name="Cooke R."/>
            <person name="Berger C."/>
            <person name="Monfort A."/>
            <person name="Casacuberta E."/>
            <person name="Gibbons T."/>
            <person name="Weber N."/>
            <person name="Vandenbol M."/>
            <person name="Bargues M."/>
            <person name="Terol J."/>
            <person name="Torres A."/>
            <person name="Perez-Perez A."/>
            <person name="Purnelle B."/>
            <person name="Bent E."/>
            <person name="Johnson S."/>
            <person name="Tacon D."/>
            <person name="Jesse T."/>
            <person name="Heijnen L."/>
            <person name="Schwarz S."/>
            <person name="Scholler P."/>
            <person name="Heber S."/>
            <person name="Francs P."/>
            <person name="Bielke C."/>
            <person name="Frishman D."/>
            <person name="Haase D."/>
            <person name="Lemcke K."/>
            <person name="Mewes H.-W."/>
            <person name="Stocker S."/>
            <person name="Zaccaria P."/>
            <person name="Bevan M."/>
            <person name="Wilson R.K."/>
            <person name="de la Bastide M."/>
            <person name="Habermann K."/>
            <person name="Parnell L."/>
            <person name="Dedhia N."/>
            <person name="Gnoj L."/>
            <person name="Schutz K."/>
            <person name="Huang E."/>
            <person name="Spiegel L."/>
            <person name="Sekhon M."/>
            <person name="Murray J."/>
            <person name="Sheet P."/>
            <person name="Cordes M."/>
            <person name="Abu-Threideh J."/>
            <person name="Stoneking T."/>
            <person name="Kalicki J."/>
            <person name="Graves T."/>
            <person name="Harmon G."/>
            <person name="Edwards J."/>
            <person name="Latreille P."/>
            <person name="Courtney L."/>
            <person name="Cloud J."/>
            <person name="Abbott A."/>
            <person name="Scott K."/>
            <person name="Johnson D."/>
            <person name="Minx P."/>
            <person name="Bentley D."/>
            <person name="Fulton B."/>
            <person name="Miller N."/>
            <person name="Greco T."/>
            <person name="Kemp K."/>
            <person name="Kramer J."/>
            <person name="Fulton L."/>
            <person name="Mardis E."/>
            <person name="Dante M."/>
            <person name="Pepin K."/>
            <person name="Hillier L.W."/>
            <person name="Nelson J."/>
            <person name="Spieth J."/>
            <person name="Ryan E."/>
            <person name="Andrews S."/>
            <person name="Geisel C."/>
            <person name="Layman D."/>
            <person name="Du H."/>
            <person name="Ali J."/>
            <person name="Berghoff A."/>
            <person name="Jones K."/>
            <person name="Drone K."/>
            <person name="Cotton M."/>
            <person name="Joshu C."/>
            <person name="Antonoiu B."/>
            <person name="Zidanic M."/>
            <person name="Strong C."/>
            <person name="Sun H."/>
            <person name="Lamar B."/>
            <person name="Yordan C."/>
            <person name="Ma P."/>
            <person name="Zhong J."/>
            <person name="Preston R."/>
            <person name="Vil D."/>
            <person name="Shekher M."/>
            <person name="Matero A."/>
            <person name="Shah R."/>
            <person name="Swaby I.K."/>
            <person name="O'Shaughnessy A."/>
            <person name="Rodriguez M."/>
            <person name="Hoffman J."/>
            <person name="Till S."/>
            <person name="Granat S."/>
            <person name="Shohdy N."/>
            <person name="Hasegawa A."/>
            <person name="Hameed A."/>
            <person name="Lodhi M."/>
            <person name="Johnson A."/>
            <person name="Chen E."/>
            <person name="Marra M.A."/>
            <person name="Martienssen R."/>
            <person name="McCombie W.R."/>
        </authorList>
    </citation>
    <scope>NUCLEOTIDE SEQUENCE [LARGE SCALE GENOMIC DNA]</scope>
    <source>
        <strain>cv. Columbia</strain>
    </source>
</reference>
<reference key="2">
    <citation type="journal article" date="2017" name="Plant J.">
        <title>Araport11: a complete reannotation of the Arabidopsis thaliana reference genome.</title>
        <authorList>
            <person name="Cheng C.Y."/>
            <person name="Krishnakumar V."/>
            <person name="Chan A.P."/>
            <person name="Thibaud-Nissen F."/>
            <person name="Schobel S."/>
            <person name="Town C.D."/>
        </authorList>
    </citation>
    <scope>GENOME REANNOTATION</scope>
    <source>
        <strain>cv. Columbia</strain>
    </source>
</reference>
<reference key="3">
    <citation type="journal article" date="2002" name="Science">
        <title>Functional annotation of a full-length Arabidopsis cDNA collection.</title>
        <authorList>
            <person name="Seki M."/>
            <person name="Narusaka M."/>
            <person name="Kamiya A."/>
            <person name="Ishida J."/>
            <person name="Satou M."/>
            <person name="Sakurai T."/>
            <person name="Nakajima M."/>
            <person name="Enju A."/>
            <person name="Akiyama K."/>
            <person name="Oono Y."/>
            <person name="Muramatsu M."/>
            <person name="Hayashizaki Y."/>
            <person name="Kawai J."/>
            <person name="Carninci P."/>
            <person name="Itoh M."/>
            <person name="Ishii Y."/>
            <person name="Arakawa T."/>
            <person name="Shibata K."/>
            <person name="Shinagawa A."/>
            <person name="Shinozaki K."/>
        </authorList>
    </citation>
    <scope>NUCLEOTIDE SEQUENCE [LARGE SCALE MRNA]</scope>
    <source>
        <strain>cv. Columbia</strain>
    </source>
</reference>
<reference key="4">
    <citation type="journal article" date="2003" name="Science">
        <title>Empirical analysis of transcriptional activity in the Arabidopsis genome.</title>
        <authorList>
            <person name="Yamada K."/>
            <person name="Lim J."/>
            <person name="Dale J.M."/>
            <person name="Chen H."/>
            <person name="Shinn P."/>
            <person name="Palm C.J."/>
            <person name="Southwick A.M."/>
            <person name="Wu H.C."/>
            <person name="Kim C.J."/>
            <person name="Nguyen M."/>
            <person name="Pham P.K."/>
            <person name="Cheuk R.F."/>
            <person name="Karlin-Newmann G."/>
            <person name="Liu S.X."/>
            <person name="Lam B."/>
            <person name="Sakano H."/>
            <person name="Wu T."/>
            <person name="Yu G."/>
            <person name="Miranda M."/>
            <person name="Quach H.L."/>
            <person name="Tripp M."/>
            <person name="Chang C.H."/>
            <person name="Lee J.M."/>
            <person name="Toriumi M.J."/>
            <person name="Chan M.M."/>
            <person name="Tang C.C."/>
            <person name="Onodera C.S."/>
            <person name="Deng J.M."/>
            <person name="Akiyama K."/>
            <person name="Ansari Y."/>
            <person name="Arakawa T."/>
            <person name="Banh J."/>
            <person name="Banno F."/>
            <person name="Bowser L."/>
            <person name="Brooks S.Y."/>
            <person name="Carninci P."/>
            <person name="Chao Q."/>
            <person name="Choy N."/>
            <person name="Enju A."/>
            <person name="Goldsmith A.D."/>
            <person name="Gurjal M."/>
            <person name="Hansen N.F."/>
            <person name="Hayashizaki Y."/>
            <person name="Johnson-Hopson C."/>
            <person name="Hsuan V.W."/>
            <person name="Iida K."/>
            <person name="Karnes M."/>
            <person name="Khan S."/>
            <person name="Koesema E."/>
            <person name="Ishida J."/>
            <person name="Jiang P.X."/>
            <person name="Jones T."/>
            <person name="Kawai J."/>
            <person name="Kamiya A."/>
            <person name="Meyers C."/>
            <person name="Nakajima M."/>
            <person name="Narusaka M."/>
            <person name="Seki M."/>
            <person name="Sakurai T."/>
            <person name="Satou M."/>
            <person name="Tamse R."/>
            <person name="Vaysberg M."/>
            <person name="Wallender E.K."/>
            <person name="Wong C."/>
            <person name="Yamamura Y."/>
            <person name="Yuan S."/>
            <person name="Shinozaki K."/>
            <person name="Davis R.W."/>
            <person name="Theologis A."/>
            <person name="Ecker J.R."/>
        </authorList>
    </citation>
    <scope>NUCLEOTIDE SEQUENCE [LARGE SCALE MRNA]</scope>
    <source>
        <strain>cv. Columbia</strain>
    </source>
</reference>
<reference key="5">
    <citation type="journal article" date="2014" name="Plant Mol. Biol.">
        <title>DWD HYPERSENSITIVE TO UV-B 1 is negatively involved in UV-B mediated cellular responses in Arabidopsis.</title>
        <authorList>
            <person name="Kim S.-H."/>
            <person name="Kim H."/>
            <person name="Seo K.-I."/>
            <person name="Kim S.-H."/>
            <person name="Chung S."/>
            <person name="Huang X."/>
            <person name="Yang P."/>
            <person name="Deng X.W."/>
            <person name="Lee J.-H."/>
        </authorList>
    </citation>
    <scope>FUNCTION</scope>
    <scope>DISRUPTION PHENOTYPE</scope>
    <scope>INTERACTION WITH DDB1A</scope>
    <scope>INDUCTION BY UV-B</scope>
    <source>
        <strain>cv. Columbia</strain>
    </source>
</reference>
<reference key="6">
    <citation type="journal article" date="2017" name="Biochem. Biophys. Res. Commun.">
        <title>DHU1 negatively regulates UV-B signaling via its direct interaction with COP1 and RUP1.</title>
        <authorList>
            <person name="Kim S.-H."/>
            <person name="Kim H."/>
            <person name="Chung S."/>
            <person name="Lee J.-H."/>
        </authorList>
    </citation>
    <scope>FUNCTION</scope>
    <scope>DISRUPTION PHENOTYPE</scope>
    <scope>INTERACTION WITH COP1 AND RUP1</scope>
    <source>
        <strain>cv. Columbia</strain>
    </source>
</reference>
<protein>
    <recommendedName>
        <fullName evidence="5 6">Protein DWD HYPERSENSITIVE TO UV-B 1</fullName>
    </recommendedName>
</protein>
<comment type="function">
    <text evidence="3 4">May act as a substrate receptor of a CUL4-RING E3 ubiquitin-protein ligase (CRL4) complex involved in the negative regulation of cellular responses to ultraviolet-B (UV-B) illumination, likely in coordination with RUP1 (PubMed:25193399, PubMed:28735869). Interacts with COP1 and probably prevents the formation of active UVR8-COP1 complex, thus avoiding UVR8-COP1-mediated positive regulation of UV-B responses (PubMed:28735869).</text>
</comment>
<comment type="subunit">
    <text evidence="3 4">Interacts directly with DDB1A (PubMed:25193399). Binds to COP1 and RUP1 (PubMed:28735869).</text>
</comment>
<comment type="subcellular location">
    <subcellularLocation>
        <location evidence="2">Nucleus</location>
    </subcellularLocation>
</comment>
<comment type="induction">
    <text evidence="3">Accumulates in response to ultraviolet-B (UV-B) illumination.</text>
</comment>
<comment type="disruption phenotype">
    <text evidence="3 4">Hypersensitivity to ultraviolet-B (UV-B) illumination leading to short hypocotyls under UV-B; the sensitivity to UV-B is alleviated by the disruption of UVR8 and requires the presence of COP1 and HY5 (PubMed:25193399, PubMed:28735869). The double mutants dhu1-1 cop1-6 and dhu1-1 hy5-215 phenotypes resemble that of single mutants cop1-6 and hy5-215, respectively (PubMed:28735869). The UV-B responsiveness of the double mutant dhu1-1 rup1-1 is similar to that of the single mutants dhu1-1 and rup1-1 (PubMed:28735869).</text>
</comment>
<comment type="sequence caution" evidence="7">
    <conflict type="erroneous gene model prediction">
        <sequence resource="EMBL-CDS" id="CAB36705"/>
    </conflict>
</comment>
<comment type="sequence caution" evidence="7">
    <conflict type="erroneous gene model prediction">
        <sequence resource="EMBL-CDS" id="CAB80145"/>
    </conflict>
</comment>
<proteinExistence type="evidence at protein level"/>
<name>DHU1_ARATH</name>
<accession>Q8GYY7</accession>
<accession>Q9SYZ3</accession>